<comment type="function">
    <text evidence="1">Synthesizes selenophosphate from selenide and ATP.</text>
</comment>
<comment type="catalytic activity">
    <reaction evidence="1">
        <text>hydrogenselenide + ATP + H2O = selenophosphate + AMP + phosphate + 2 H(+)</text>
        <dbReference type="Rhea" id="RHEA:18737"/>
        <dbReference type="ChEBI" id="CHEBI:15377"/>
        <dbReference type="ChEBI" id="CHEBI:15378"/>
        <dbReference type="ChEBI" id="CHEBI:16144"/>
        <dbReference type="ChEBI" id="CHEBI:29317"/>
        <dbReference type="ChEBI" id="CHEBI:30616"/>
        <dbReference type="ChEBI" id="CHEBI:43474"/>
        <dbReference type="ChEBI" id="CHEBI:456215"/>
        <dbReference type="EC" id="2.7.9.3"/>
    </reaction>
</comment>
<comment type="cofactor">
    <cofactor evidence="1">
        <name>Mg(2+)</name>
        <dbReference type="ChEBI" id="CHEBI:18420"/>
    </cofactor>
    <text evidence="1">Binds 1 Mg(2+) ion per monomer.</text>
</comment>
<comment type="subunit">
    <text evidence="1">Homodimer.</text>
</comment>
<comment type="similarity">
    <text evidence="1">Belongs to the selenophosphate synthase 1 family. Class I subfamily.</text>
</comment>
<keyword id="KW-0067">ATP-binding</keyword>
<keyword id="KW-0418">Kinase</keyword>
<keyword id="KW-0460">Magnesium</keyword>
<keyword id="KW-0479">Metal-binding</keyword>
<keyword id="KW-0547">Nucleotide-binding</keyword>
<keyword id="KW-0711">Selenium</keyword>
<keyword id="KW-0712">Selenocysteine</keyword>
<keyword id="KW-0808">Transferase</keyword>
<evidence type="ECO:0000255" key="1">
    <source>
        <dbReference type="HAMAP-Rule" id="MF_00625"/>
    </source>
</evidence>
<sequence length="350" mass="36472">MSRIRLVDSVKAAGUAAKVAPGDLERILAGLPRDPSVEDRVIVGTRHNEDAAVVRLPGGQSIVQTLDFFTPIVNDPYHFGRIAAANALSDVYAMGGEPWCAMNIVCFPVKRLPESILADILRGGSDALREAGAALVGGHSVEDDELKYGLSVTGLIDPEIIASNAGLRPGDHLLLTKPLGTGILATAVKANWPGCDAHEEELFRWASRLNKGAGRVIRELRLKAATDVTGFGLGGHCLEMAGASGVTVALDTAALPVLPGVTELAGMGLVPEGSHANRAHCHKHVHVAPGVSPVLVDVAFDAQTSGGMLLAVSPDQMDAATTLLAETGDPAYPVGEVLKPLPGGVRLLLR</sequence>
<accession>B8DNL1</accession>
<dbReference type="EC" id="2.7.9.3" evidence="1"/>
<dbReference type="EMBL" id="CP001197">
    <property type="protein sequence ID" value="ACL07068.1"/>
    <property type="molecule type" value="Genomic_DNA"/>
</dbReference>
<dbReference type="STRING" id="883.DvMF_0107"/>
<dbReference type="KEGG" id="dvm:DvMF_0107"/>
<dbReference type="eggNOG" id="COG0709">
    <property type="taxonomic scope" value="Bacteria"/>
</dbReference>
<dbReference type="HOGENOM" id="CLU_032859_0_1_7"/>
<dbReference type="OrthoDB" id="9767928at2"/>
<dbReference type="GO" id="GO:0005737">
    <property type="term" value="C:cytoplasm"/>
    <property type="evidence" value="ECO:0007669"/>
    <property type="project" value="TreeGrafter"/>
</dbReference>
<dbReference type="GO" id="GO:0005524">
    <property type="term" value="F:ATP binding"/>
    <property type="evidence" value="ECO:0007669"/>
    <property type="project" value="UniProtKB-UniRule"/>
</dbReference>
<dbReference type="GO" id="GO:0000287">
    <property type="term" value="F:magnesium ion binding"/>
    <property type="evidence" value="ECO:0007669"/>
    <property type="project" value="UniProtKB-UniRule"/>
</dbReference>
<dbReference type="GO" id="GO:0004756">
    <property type="term" value="F:selenide, water dikinase activity"/>
    <property type="evidence" value="ECO:0007669"/>
    <property type="project" value="UniProtKB-UniRule"/>
</dbReference>
<dbReference type="GO" id="GO:0016260">
    <property type="term" value="P:selenocysteine biosynthetic process"/>
    <property type="evidence" value="ECO:0007669"/>
    <property type="project" value="InterPro"/>
</dbReference>
<dbReference type="CDD" id="cd02195">
    <property type="entry name" value="SelD"/>
    <property type="match status" value="1"/>
</dbReference>
<dbReference type="FunFam" id="3.30.1330.10:FF:000003">
    <property type="entry name" value="Selenide, water dikinase"/>
    <property type="match status" value="1"/>
</dbReference>
<dbReference type="Gene3D" id="3.90.650.10">
    <property type="entry name" value="PurM-like C-terminal domain"/>
    <property type="match status" value="1"/>
</dbReference>
<dbReference type="Gene3D" id="3.30.1330.10">
    <property type="entry name" value="PurM-like, N-terminal domain"/>
    <property type="match status" value="1"/>
</dbReference>
<dbReference type="HAMAP" id="MF_00625">
    <property type="entry name" value="SelD"/>
    <property type="match status" value="1"/>
</dbReference>
<dbReference type="InterPro" id="IPR010918">
    <property type="entry name" value="PurM-like_C_dom"/>
</dbReference>
<dbReference type="InterPro" id="IPR036676">
    <property type="entry name" value="PurM-like_C_sf"/>
</dbReference>
<dbReference type="InterPro" id="IPR016188">
    <property type="entry name" value="PurM-like_N"/>
</dbReference>
<dbReference type="InterPro" id="IPR036921">
    <property type="entry name" value="PurM-like_N_sf"/>
</dbReference>
<dbReference type="InterPro" id="IPR023061">
    <property type="entry name" value="SelD_I"/>
</dbReference>
<dbReference type="InterPro" id="IPR004536">
    <property type="entry name" value="SPS/SelD"/>
</dbReference>
<dbReference type="NCBIfam" id="NF002098">
    <property type="entry name" value="PRK00943.1"/>
    <property type="match status" value="1"/>
</dbReference>
<dbReference type="NCBIfam" id="TIGR00476">
    <property type="entry name" value="selD"/>
    <property type="match status" value="1"/>
</dbReference>
<dbReference type="PANTHER" id="PTHR10256:SF0">
    <property type="entry name" value="INACTIVE SELENIDE, WATER DIKINASE-LIKE PROTEIN-RELATED"/>
    <property type="match status" value="1"/>
</dbReference>
<dbReference type="PANTHER" id="PTHR10256">
    <property type="entry name" value="SELENIDE, WATER DIKINASE"/>
    <property type="match status" value="1"/>
</dbReference>
<dbReference type="Pfam" id="PF00586">
    <property type="entry name" value="AIRS"/>
    <property type="match status" value="1"/>
</dbReference>
<dbReference type="Pfam" id="PF02769">
    <property type="entry name" value="AIRS_C"/>
    <property type="match status" value="1"/>
</dbReference>
<dbReference type="PIRSF" id="PIRSF036407">
    <property type="entry name" value="Selenphspht_syn"/>
    <property type="match status" value="1"/>
</dbReference>
<dbReference type="SUPFAM" id="SSF56042">
    <property type="entry name" value="PurM C-terminal domain-like"/>
    <property type="match status" value="1"/>
</dbReference>
<dbReference type="SUPFAM" id="SSF55326">
    <property type="entry name" value="PurM N-terminal domain-like"/>
    <property type="match status" value="1"/>
</dbReference>
<name>SELD_NITV9</name>
<organism>
    <name type="scientific">Nitratidesulfovibrio vulgaris (strain DSM 19637 / Miyazaki F)</name>
    <name type="common">Desulfovibrio vulgaris</name>
    <dbReference type="NCBI Taxonomy" id="883"/>
    <lineage>
        <taxon>Bacteria</taxon>
        <taxon>Pseudomonadati</taxon>
        <taxon>Thermodesulfobacteriota</taxon>
        <taxon>Desulfovibrionia</taxon>
        <taxon>Desulfovibrionales</taxon>
        <taxon>Desulfovibrionaceae</taxon>
        <taxon>Nitratidesulfovibrio</taxon>
    </lineage>
</organism>
<protein>
    <recommendedName>
        <fullName evidence="1">Selenide, water dikinase</fullName>
        <ecNumber evidence="1">2.7.9.3</ecNumber>
    </recommendedName>
    <alternativeName>
        <fullName evidence="1">Selenium donor protein</fullName>
    </alternativeName>
    <alternativeName>
        <fullName evidence="1">Selenophosphate synthase</fullName>
    </alternativeName>
</protein>
<feature type="chain" id="PRO_1000130518" description="Selenide, water dikinase">
    <location>
        <begin position="1"/>
        <end position="350"/>
    </location>
</feature>
<feature type="active site" evidence="1">
    <location>
        <position position="15"/>
    </location>
</feature>
<feature type="binding site" description="in other chain" evidence="1">
    <location>
        <position position="18"/>
    </location>
    <ligand>
        <name>ATP</name>
        <dbReference type="ChEBI" id="CHEBI:30616"/>
        <note>ligand shared between dimeric partners</note>
    </ligand>
</feature>
<feature type="binding site" description="in other chain" evidence="1">
    <location>
        <begin position="47"/>
        <end position="49"/>
    </location>
    <ligand>
        <name>ATP</name>
        <dbReference type="ChEBI" id="CHEBI:30616"/>
        <note>ligand shared between dimeric partners</note>
    </ligand>
</feature>
<feature type="binding site" evidence="1">
    <location>
        <position position="50"/>
    </location>
    <ligand>
        <name>Mg(2+)</name>
        <dbReference type="ChEBI" id="CHEBI:18420"/>
    </ligand>
</feature>
<feature type="binding site" description="in other chain" evidence="1">
    <location>
        <position position="67"/>
    </location>
    <ligand>
        <name>ATP</name>
        <dbReference type="ChEBI" id="CHEBI:30616"/>
        <note>ligand shared between dimeric partners</note>
    </ligand>
</feature>
<feature type="binding site" description="in other chain" evidence="1">
    <location>
        <position position="90"/>
    </location>
    <ligand>
        <name>ATP</name>
        <dbReference type="ChEBI" id="CHEBI:30616"/>
        <note>ligand shared between dimeric partners</note>
    </ligand>
</feature>
<feature type="binding site" evidence="1">
    <location>
        <position position="90"/>
    </location>
    <ligand>
        <name>Mg(2+)</name>
        <dbReference type="ChEBI" id="CHEBI:18420"/>
    </ligand>
</feature>
<feature type="binding site" evidence="1">
    <location>
        <begin position="138"/>
        <end position="140"/>
    </location>
    <ligand>
        <name>ATP</name>
        <dbReference type="ChEBI" id="CHEBI:30616"/>
        <note>ligand shared between dimeric partners</note>
    </ligand>
</feature>
<feature type="binding site" evidence="1">
    <location>
        <position position="227"/>
    </location>
    <ligand>
        <name>Mg(2+)</name>
        <dbReference type="ChEBI" id="CHEBI:18420"/>
    </ligand>
</feature>
<feature type="site" description="Important for catalytic activity" evidence="1">
    <location>
        <position position="18"/>
    </location>
</feature>
<feature type="non-standard amino acid" description="Selenocysteine">
    <location>
        <position position="15"/>
    </location>
</feature>
<reference key="1">
    <citation type="submission" date="2008-10" db="EMBL/GenBank/DDBJ databases">
        <title>Complete sequence of Desulfovibrio vulgaris str. 'Miyazaki F'.</title>
        <authorList>
            <person name="Lucas S."/>
            <person name="Copeland A."/>
            <person name="Lapidus A."/>
            <person name="Glavina del Rio T."/>
            <person name="Dalin E."/>
            <person name="Tice H."/>
            <person name="Bruce D."/>
            <person name="Goodwin L."/>
            <person name="Pitluck S."/>
            <person name="Sims D."/>
            <person name="Brettin T."/>
            <person name="Detter J.C."/>
            <person name="Han C."/>
            <person name="Larimer F."/>
            <person name="Land M."/>
            <person name="Hauser L."/>
            <person name="Kyrpides N."/>
            <person name="Mikhailova N."/>
            <person name="Hazen T.C."/>
            <person name="Richardson P."/>
        </authorList>
    </citation>
    <scope>NUCLEOTIDE SEQUENCE [LARGE SCALE GENOMIC DNA]</scope>
    <source>
        <strain>DSM 19637 / Miyazaki F</strain>
    </source>
</reference>
<gene>
    <name evidence="1" type="primary">selD</name>
    <name type="ordered locus">DvMF_0107</name>
</gene>
<proteinExistence type="inferred from homology"/>